<dbReference type="EMBL" id="AE017220">
    <property type="protein sequence ID" value="AAX67871.1"/>
    <property type="molecule type" value="Genomic_DNA"/>
</dbReference>
<dbReference type="KEGG" id="sec:SCH_3965"/>
<dbReference type="HOGENOM" id="CLU_028880_0_0_6"/>
<dbReference type="Proteomes" id="UP000000538">
    <property type="component" value="Chromosome"/>
</dbReference>
<dbReference type="GO" id="GO:0005886">
    <property type="term" value="C:plasma membrane"/>
    <property type="evidence" value="ECO:0007669"/>
    <property type="project" value="UniProtKB-SubCell"/>
</dbReference>
<dbReference type="GO" id="GO:0022857">
    <property type="term" value="F:transmembrane transporter activity"/>
    <property type="evidence" value="ECO:0007669"/>
    <property type="project" value="InterPro"/>
</dbReference>
<dbReference type="CDD" id="cd06579">
    <property type="entry name" value="TM_PBP1_transp_AraH_like"/>
    <property type="match status" value="1"/>
</dbReference>
<dbReference type="InterPro" id="IPR001851">
    <property type="entry name" value="ABC_transp_permease"/>
</dbReference>
<dbReference type="NCBIfam" id="NF011612">
    <property type="entry name" value="PRK15038.1"/>
    <property type="match status" value="1"/>
</dbReference>
<dbReference type="PANTHER" id="PTHR32196">
    <property type="entry name" value="ABC TRANSPORTER PERMEASE PROTEIN YPHD-RELATED-RELATED"/>
    <property type="match status" value="1"/>
</dbReference>
<dbReference type="PANTHER" id="PTHR32196:SF71">
    <property type="entry name" value="AUTOINDUCER 2 IMPORT SYSTEM PERMEASE PROTEIN LSRD"/>
    <property type="match status" value="1"/>
</dbReference>
<dbReference type="Pfam" id="PF02653">
    <property type="entry name" value="BPD_transp_2"/>
    <property type="match status" value="1"/>
</dbReference>
<feature type="chain" id="PRO_0000351373" description="Autoinducer 2 import system permease protein LsrD">
    <location>
        <begin position="1"/>
        <end position="332"/>
    </location>
</feature>
<feature type="transmembrane region" description="Helical" evidence="2">
    <location>
        <begin position="7"/>
        <end position="27"/>
    </location>
</feature>
<feature type="transmembrane region" description="Helical" evidence="2">
    <location>
        <begin position="45"/>
        <end position="65"/>
    </location>
</feature>
<feature type="transmembrane region" description="Helical" evidence="2">
    <location>
        <begin position="70"/>
        <end position="90"/>
    </location>
</feature>
<feature type="transmembrane region" description="Helical" evidence="2">
    <location>
        <begin position="91"/>
        <end position="111"/>
    </location>
</feature>
<feature type="transmembrane region" description="Helical" evidence="2">
    <location>
        <begin position="118"/>
        <end position="138"/>
    </location>
</feature>
<feature type="transmembrane region" description="Helical" evidence="2">
    <location>
        <begin position="162"/>
        <end position="182"/>
    </location>
</feature>
<feature type="transmembrane region" description="Helical" evidence="2">
    <location>
        <begin position="216"/>
        <end position="236"/>
    </location>
</feature>
<feature type="transmembrane region" description="Helical" evidence="2">
    <location>
        <begin position="240"/>
        <end position="260"/>
    </location>
</feature>
<feature type="transmembrane region" description="Helical" evidence="2">
    <location>
        <begin position="261"/>
        <end position="281"/>
    </location>
</feature>
<feature type="transmembrane region" description="Helical" evidence="2">
    <location>
        <begin position="288"/>
        <end position="308"/>
    </location>
</feature>
<comment type="function">
    <text evidence="1">Part of the ABC transporter complex LsrABCD involved in autoinducer 2 (AI-2) import. Probably responsible for the translocation of the substrate across the membrane (By similarity).</text>
</comment>
<comment type="subunit">
    <text evidence="1">The complex is composed of two ATP-binding proteins (LsrA), two transmembrane proteins (LsrC and LsrD) and a solute-binding protein (LsrB).</text>
</comment>
<comment type="subcellular location">
    <subcellularLocation>
        <location evidence="1">Cell inner membrane</location>
        <topology evidence="1">Multi-pass membrane protein</topology>
    </subcellularLocation>
</comment>
<comment type="similarity">
    <text evidence="3">Belongs to the binding-protein-dependent transport system permease family. AraH/RbsC subfamily.</text>
</comment>
<proteinExistence type="inferred from homology"/>
<gene>
    <name type="primary">lsrD</name>
    <name type="ordered locus">SCH_3965</name>
</gene>
<sequence length="332" mass="35133">MNPWRRYSWEIALAALLIFEILAFGLINPRLLDINVLLFSTSDFICIGIVALPLTMVIVSGGMDISFGSTIGLCAITLGVLFQLGMPLPLAIIITLLLGAICGLINAGLIIYTGVNPLVITLGTMYLFGGSALLLSGMAGATGYEGIGGFPTAFTDFANISFLGIPMPLIFFLVCCLFFWLLMHRTHMGRNVFLIGQSARVAQYSAIPVNRTLYTVYAMTGCASAIAAVLLVSYFGSARSDLGASFLMPAITAVVLGGANIYGGSGSIMGSALAALLVGFLQQGLQMAGVPNQISSALSGALLIVVVVGRSVSLHRHQILEWYSRRRNAHQA</sequence>
<organism>
    <name type="scientific">Salmonella choleraesuis (strain SC-B67)</name>
    <dbReference type="NCBI Taxonomy" id="321314"/>
    <lineage>
        <taxon>Bacteria</taxon>
        <taxon>Pseudomonadati</taxon>
        <taxon>Pseudomonadota</taxon>
        <taxon>Gammaproteobacteria</taxon>
        <taxon>Enterobacterales</taxon>
        <taxon>Enterobacteriaceae</taxon>
        <taxon>Salmonella</taxon>
    </lineage>
</organism>
<reference key="1">
    <citation type="journal article" date="2005" name="Nucleic Acids Res.">
        <title>The genome sequence of Salmonella enterica serovar Choleraesuis, a highly invasive and resistant zoonotic pathogen.</title>
        <authorList>
            <person name="Chiu C.-H."/>
            <person name="Tang P."/>
            <person name="Chu C."/>
            <person name="Hu S."/>
            <person name="Bao Q."/>
            <person name="Yu J."/>
            <person name="Chou Y.-Y."/>
            <person name="Wang H.-S."/>
            <person name="Lee Y.-S."/>
        </authorList>
    </citation>
    <scope>NUCLEOTIDE SEQUENCE [LARGE SCALE GENOMIC DNA]</scope>
    <source>
        <strain>SC-B67</strain>
    </source>
</reference>
<accession>Q57HE1</accession>
<evidence type="ECO:0000250" key="1"/>
<evidence type="ECO:0000255" key="2"/>
<evidence type="ECO:0000305" key="3"/>
<keyword id="KW-0997">Cell inner membrane</keyword>
<keyword id="KW-1003">Cell membrane</keyword>
<keyword id="KW-0472">Membrane</keyword>
<keyword id="KW-0812">Transmembrane</keyword>
<keyword id="KW-1133">Transmembrane helix</keyword>
<keyword id="KW-0813">Transport</keyword>
<name>LSRD_SALCH</name>
<protein>
    <recommendedName>
        <fullName>Autoinducer 2 import system permease protein LsrD</fullName>
        <shortName>AI-2 import system permease protein LsrD</shortName>
    </recommendedName>
</protein>